<organism>
    <name type="scientific">Escherichia coli O1:K1 / APEC</name>
    <dbReference type="NCBI Taxonomy" id="405955"/>
    <lineage>
        <taxon>Bacteria</taxon>
        <taxon>Pseudomonadati</taxon>
        <taxon>Pseudomonadota</taxon>
        <taxon>Gammaproteobacteria</taxon>
        <taxon>Enterobacterales</taxon>
        <taxon>Enterobacteriaceae</taxon>
        <taxon>Escherichia</taxon>
    </lineage>
</organism>
<evidence type="ECO:0000255" key="1">
    <source>
        <dbReference type="HAMAP-Rule" id="MF_01220"/>
    </source>
</evidence>
<feature type="chain" id="PRO_1000053921" description="Uridylate kinase">
    <location>
        <begin position="1"/>
        <end position="241"/>
    </location>
</feature>
<feature type="region of interest" description="Involved in allosteric activation by GTP" evidence="1">
    <location>
        <begin position="23"/>
        <end position="28"/>
    </location>
</feature>
<feature type="binding site" evidence="1">
    <location>
        <begin position="15"/>
        <end position="18"/>
    </location>
    <ligand>
        <name>ATP</name>
        <dbReference type="ChEBI" id="CHEBI:30616"/>
    </ligand>
</feature>
<feature type="binding site" evidence="1">
    <location>
        <position position="57"/>
    </location>
    <ligand>
        <name>UMP</name>
        <dbReference type="ChEBI" id="CHEBI:57865"/>
    </ligand>
</feature>
<feature type="binding site" evidence="1">
    <location>
        <position position="58"/>
    </location>
    <ligand>
        <name>ATP</name>
        <dbReference type="ChEBI" id="CHEBI:30616"/>
    </ligand>
</feature>
<feature type="binding site" evidence="1">
    <location>
        <position position="62"/>
    </location>
    <ligand>
        <name>ATP</name>
        <dbReference type="ChEBI" id="CHEBI:30616"/>
    </ligand>
</feature>
<feature type="binding site" evidence="1">
    <location>
        <position position="77"/>
    </location>
    <ligand>
        <name>UMP</name>
        <dbReference type="ChEBI" id="CHEBI:57865"/>
    </ligand>
</feature>
<feature type="binding site" evidence="1">
    <location>
        <begin position="138"/>
        <end position="145"/>
    </location>
    <ligand>
        <name>UMP</name>
        <dbReference type="ChEBI" id="CHEBI:57865"/>
    </ligand>
</feature>
<feature type="binding site" evidence="1">
    <location>
        <position position="165"/>
    </location>
    <ligand>
        <name>ATP</name>
        <dbReference type="ChEBI" id="CHEBI:30616"/>
    </ligand>
</feature>
<feature type="binding site" evidence="1">
    <location>
        <position position="171"/>
    </location>
    <ligand>
        <name>ATP</name>
        <dbReference type="ChEBI" id="CHEBI:30616"/>
    </ligand>
</feature>
<feature type="binding site" evidence="1">
    <location>
        <position position="174"/>
    </location>
    <ligand>
        <name>ATP</name>
        <dbReference type="ChEBI" id="CHEBI:30616"/>
    </ligand>
</feature>
<protein>
    <recommendedName>
        <fullName evidence="1">Uridylate kinase</fullName>
        <shortName evidence="1">UK</shortName>
        <ecNumber evidence="1">2.7.4.22</ecNumber>
    </recommendedName>
    <alternativeName>
        <fullName evidence="1">Uridine monophosphate kinase</fullName>
        <shortName evidence="1">UMP kinase</shortName>
        <shortName evidence="1">UMPK</shortName>
    </alternativeName>
</protein>
<sequence>MATNAKPVYKRILLKLSGEALQGTEGFGIDASILDRMAQEIKELVELGIQVGVVIGGGNLFRGAGLAKAGMNRVVGDHMGMLATVMNGLAMRDALHRAYVNARLMSAIPLNGVCDSYSWAEAISLLRNNRVVILSAGTGNPFFTTDSAACLRGIEIEADVVLKATKVDGVFTADPAKDPTATMYEQLTYSEVLEKELKVMDLAAFTLARDHKLPIRVFNMNKPGALRRVVMGEKEGTLITE</sequence>
<accession>A1A7L5</accession>
<name>PYRH_ECOK1</name>
<proteinExistence type="inferred from homology"/>
<keyword id="KW-0021">Allosteric enzyme</keyword>
<keyword id="KW-0067">ATP-binding</keyword>
<keyword id="KW-0963">Cytoplasm</keyword>
<keyword id="KW-0418">Kinase</keyword>
<keyword id="KW-0547">Nucleotide-binding</keyword>
<keyword id="KW-0665">Pyrimidine biosynthesis</keyword>
<keyword id="KW-1185">Reference proteome</keyword>
<keyword id="KW-0808">Transferase</keyword>
<reference key="1">
    <citation type="journal article" date="2007" name="J. Bacteriol.">
        <title>The genome sequence of avian pathogenic Escherichia coli strain O1:K1:H7 shares strong similarities with human extraintestinal pathogenic E. coli genomes.</title>
        <authorList>
            <person name="Johnson T.J."/>
            <person name="Kariyawasam S."/>
            <person name="Wannemuehler Y."/>
            <person name="Mangiamele P."/>
            <person name="Johnson S.J."/>
            <person name="Doetkott C."/>
            <person name="Skyberg J.A."/>
            <person name="Lynne A.M."/>
            <person name="Johnson J.R."/>
            <person name="Nolan L.K."/>
        </authorList>
    </citation>
    <scope>NUCLEOTIDE SEQUENCE [LARGE SCALE GENOMIC DNA]</scope>
</reference>
<comment type="function">
    <text evidence="1">Catalyzes the reversible phosphorylation of UMP to UDP.</text>
</comment>
<comment type="catalytic activity">
    <reaction evidence="1">
        <text>UMP + ATP = UDP + ADP</text>
        <dbReference type="Rhea" id="RHEA:24400"/>
        <dbReference type="ChEBI" id="CHEBI:30616"/>
        <dbReference type="ChEBI" id="CHEBI:57865"/>
        <dbReference type="ChEBI" id="CHEBI:58223"/>
        <dbReference type="ChEBI" id="CHEBI:456216"/>
        <dbReference type="EC" id="2.7.4.22"/>
    </reaction>
</comment>
<comment type="activity regulation">
    <text evidence="1">Allosterically activated by GTP. Inhibited by UTP.</text>
</comment>
<comment type="pathway">
    <text evidence="1">Pyrimidine metabolism; CTP biosynthesis via de novo pathway; UDP from UMP (UMPK route): step 1/1.</text>
</comment>
<comment type="subunit">
    <text evidence="1">Homohexamer.</text>
</comment>
<comment type="subcellular location">
    <subcellularLocation>
        <location evidence="1">Cytoplasm</location>
    </subcellularLocation>
</comment>
<comment type="similarity">
    <text evidence="1">Belongs to the UMP kinase family.</text>
</comment>
<dbReference type="EC" id="2.7.4.22" evidence="1"/>
<dbReference type="EMBL" id="CP000468">
    <property type="protein sequence ID" value="ABI99654.1"/>
    <property type="molecule type" value="Genomic_DNA"/>
</dbReference>
<dbReference type="RefSeq" id="WP_000224573.1">
    <property type="nucleotide sequence ID" value="NZ_CADILS010000027.1"/>
</dbReference>
<dbReference type="SMR" id="A1A7L5"/>
<dbReference type="GeneID" id="93777254"/>
<dbReference type="KEGG" id="ecv:APECO1_1816"/>
<dbReference type="HOGENOM" id="CLU_033861_0_0_6"/>
<dbReference type="UniPathway" id="UPA00159">
    <property type="reaction ID" value="UER00275"/>
</dbReference>
<dbReference type="Proteomes" id="UP000008216">
    <property type="component" value="Chromosome"/>
</dbReference>
<dbReference type="GO" id="GO:0005829">
    <property type="term" value="C:cytosol"/>
    <property type="evidence" value="ECO:0007669"/>
    <property type="project" value="TreeGrafter"/>
</dbReference>
<dbReference type="GO" id="GO:0005524">
    <property type="term" value="F:ATP binding"/>
    <property type="evidence" value="ECO:0007669"/>
    <property type="project" value="UniProtKB-KW"/>
</dbReference>
<dbReference type="GO" id="GO:0033862">
    <property type="term" value="F:UMP kinase activity"/>
    <property type="evidence" value="ECO:0007669"/>
    <property type="project" value="UniProtKB-EC"/>
</dbReference>
<dbReference type="GO" id="GO:0044210">
    <property type="term" value="P:'de novo' CTP biosynthetic process"/>
    <property type="evidence" value="ECO:0007669"/>
    <property type="project" value="UniProtKB-UniRule"/>
</dbReference>
<dbReference type="GO" id="GO:0006225">
    <property type="term" value="P:UDP biosynthetic process"/>
    <property type="evidence" value="ECO:0007669"/>
    <property type="project" value="TreeGrafter"/>
</dbReference>
<dbReference type="CDD" id="cd04254">
    <property type="entry name" value="AAK_UMPK-PyrH-Ec"/>
    <property type="match status" value="1"/>
</dbReference>
<dbReference type="FunFam" id="3.40.1160.10:FF:000001">
    <property type="entry name" value="Uridylate kinase"/>
    <property type="match status" value="1"/>
</dbReference>
<dbReference type="Gene3D" id="3.40.1160.10">
    <property type="entry name" value="Acetylglutamate kinase-like"/>
    <property type="match status" value="1"/>
</dbReference>
<dbReference type="HAMAP" id="MF_01220_B">
    <property type="entry name" value="PyrH_B"/>
    <property type="match status" value="1"/>
</dbReference>
<dbReference type="InterPro" id="IPR036393">
    <property type="entry name" value="AceGlu_kinase-like_sf"/>
</dbReference>
<dbReference type="InterPro" id="IPR001048">
    <property type="entry name" value="Asp/Glu/Uridylate_kinase"/>
</dbReference>
<dbReference type="InterPro" id="IPR011817">
    <property type="entry name" value="Uridylate_kinase"/>
</dbReference>
<dbReference type="InterPro" id="IPR015963">
    <property type="entry name" value="Uridylate_kinase_bac"/>
</dbReference>
<dbReference type="NCBIfam" id="TIGR02075">
    <property type="entry name" value="pyrH_bact"/>
    <property type="match status" value="1"/>
</dbReference>
<dbReference type="PANTHER" id="PTHR42833">
    <property type="entry name" value="URIDYLATE KINASE"/>
    <property type="match status" value="1"/>
</dbReference>
<dbReference type="PANTHER" id="PTHR42833:SF4">
    <property type="entry name" value="URIDYLATE KINASE PUMPKIN, CHLOROPLASTIC"/>
    <property type="match status" value="1"/>
</dbReference>
<dbReference type="Pfam" id="PF00696">
    <property type="entry name" value="AA_kinase"/>
    <property type="match status" value="1"/>
</dbReference>
<dbReference type="PIRSF" id="PIRSF005650">
    <property type="entry name" value="Uridylate_kin"/>
    <property type="match status" value="1"/>
</dbReference>
<dbReference type="SUPFAM" id="SSF53633">
    <property type="entry name" value="Carbamate kinase-like"/>
    <property type="match status" value="1"/>
</dbReference>
<gene>
    <name evidence="1" type="primary">pyrH</name>
    <name type="ordered locus">Ecok1_01610</name>
    <name type="ORF">APECO1_1816</name>
</gene>